<accession>P07807</accession>
<accession>D6W2T9</accession>
<dbReference type="EC" id="1.5.1.3"/>
<dbReference type="EMBL" id="Y00887">
    <property type="protein sequence ID" value="CAA68779.1"/>
    <property type="molecule type" value="Genomic_DNA"/>
</dbReference>
<dbReference type="EMBL" id="M18578">
    <property type="protein sequence ID" value="AAB59331.1"/>
    <property type="molecule type" value="Genomic_DNA"/>
</dbReference>
<dbReference type="EMBL" id="M26668">
    <property type="protein sequence ID" value="AAA34564.1"/>
    <property type="molecule type" value="Genomic_DNA"/>
</dbReference>
<dbReference type="EMBL" id="Z75144">
    <property type="protein sequence ID" value="CAA99456.1"/>
    <property type="molecule type" value="Genomic_DNA"/>
</dbReference>
<dbReference type="EMBL" id="BK006948">
    <property type="protein sequence ID" value="DAA11005.1"/>
    <property type="molecule type" value="Genomic_DNA"/>
</dbReference>
<dbReference type="PIR" id="JT0269">
    <property type="entry name" value="RDBYD"/>
</dbReference>
<dbReference type="RefSeq" id="NP_014879.1">
    <property type="nucleotide sequence ID" value="NM_001183655.1"/>
</dbReference>
<dbReference type="SMR" id="P07807"/>
<dbReference type="BioGRID" id="34628">
    <property type="interactions" value="472"/>
</dbReference>
<dbReference type="DIP" id="DIP-4120N"/>
<dbReference type="FunCoup" id="P07807">
    <property type="interactions" value="597"/>
</dbReference>
<dbReference type="IntAct" id="P07807">
    <property type="interactions" value="6"/>
</dbReference>
<dbReference type="MINT" id="P07807"/>
<dbReference type="STRING" id="4932.YOR236W"/>
<dbReference type="BindingDB" id="P07807"/>
<dbReference type="ChEMBL" id="CHEMBL2576"/>
<dbReference type="DrugCentral" id="P07807"/>
<dbReference type="PaxDb" id="4932-YOR236W"/>
<dbReference type="PeptideAtlas" id="P07807"/>
<dbReference type="EnsemblFungi" id="YOR236W_mRNA">
    <property type="protein sequence ID" value="YOR236W"/>
    <property type="gene ID" value="YOR236W"/>
</dbReference>
<dbReference type="GeneID" id="854411"/>
<dbReference type="KEGG" id="sce:YOR236W"/>
<dbReference type="AGR" id="SGD:S000005762"/>
<dbReference type="SGD" id="S000005762">
    <property type="gene designation" value="DFR1"/>
</dbReference>
<dbReference type="VEuPathDB" id="FungiDB:YOR236W"/>
<dbReference type="eggNOG" id="KOG1324">
    <property type="taxonomic scope" value="Eukaryota"/>
</dbReference>
<dbReference type="GeneTree" id="ENSGT00940000168797"/>
<dbReference type="HOGENOM" id="CLU_043966_2_1_1"/>
<dbReference type="InParanoid" id="P07807"/>
<dbReference type="OMA" id="KEMKYFR"/>
<dbReference type="OrthoDB" id="414698at2759"/>
<dbReference type="BioCyc" id="YEAST:YOR236W-MONOMER"/>
<dbReference type="Reactome" id="R-SCE-196757">
    <property type="pathway name" value="Metabolism of folate and pterines"/>
</dbReference>
<dbReference type="UniPathway" id="UPA00077">
    <property type="reaction ID" value="UER00158"/>
</dbReference>
<dbReference type="BioGRID-ORCS" id="854411">
    <property type="hits" value="8 hits in 10 CRISPR screens"/>
</dbReference>
<dbReference type="PRO" id="PR:P07807"/>
<dbReference type="Proteomes" id="UP000002311">
    <property type="component" value="Chromosome XV"/>
</dbReference>
<dbReference type="RNAct" id="P07807">
    <property type="molecule type" value="protein"/>
</dbReference>
<dbReference type="GO" id="GO:0005737">
    <property type="term" value="C:cytoplasm"/>
    <property type="evidence" value="ECO:0007005"/>
    <property type="project" value="SGD"/>
</dbReference>
<dbReference type="GO" id="GO:0005739">
    <property type="term" value="C:mitochondrion"/>
    <property type="evidence" value="ECO:0007005"/>
    <property type="project" value="SGD"/>
</dbReference>
<dbReference type="GO" id="GO:0004146">
    <property type="term" value="F:dihydrofolate reductase activity"/>
    <property type="evidence" value="ECO:0000314"/>
    <property type="project" value="SGD"/>
</dbReference>
<dbReference type="GO" id="GO:0003729">
    <property type="term" value="F:mRNA binding"/>
    <property type="evidence" value="ECO:0000314"/>
    <property type="project" value="SGD"/>
</dbReference>
<dbReference type="GO" id="GO:0050661">
    <property type="term" value="F:NADP binding"/>
    <property type="evidence" value="ECO:0000318"/>
    <property type="project" value="GO_Central"/>
</dbReference>
<dbReference type="GO" id="GO:0046452">
    <property type="term" value="P:dihydrofolate metabolic process"/>
    <property type="evidence" value="ECO:0000315"/>
    <property type="project" value="SGD"/>
</dbReference>
<dbReference type="GO" id="GO:0046655">
    <property type="term" value="P:folic acid metabolic process"/>
    <property type="evidence" value="ECO:0000318"/>
    <property type="project" value="GO_Central"/>
</dbReference>
<dbReference type="GO" id="GO:0006730">
    <property type="term" value="P:one-carbon metabolic process"/>
    <property type="evidence" value="ECO:0007669"/>
    <property type="project" value="UniProtKB-KW"/>
</dbReference>
<dbReference type="GO" id="GO:0046654">
    <property type="term" value="P:tetrahydrofolate biosynthetic process"/>
    <property type="evidence" value="ECO:0000315"/>
    <property type="project" value="SGD"/>
</dbReference>
<dbReference type="CDD" id="cd00209">
    <property type="entry name" value="DHFR"/>
    <property type="match status" value="1"/>
</dbReference>
<dbReference type="FunFam" id="3.40.430.10:FF:000015">
    <property type="entry name" value="Dihydrofolate reductase"/>
    <property type="match status" value="1"/>
</dbReference>
<dbReference type="Gene3D" id="3.40.430.10">
    <property type="entry name" value="Dihydrofolate Reductase, subunit A"/>
    <property type="match status" value="1"/>
</dbReference>
<dbReference type="InterPro" id="IPR012259">
    <property type="entry name" value="DHFR"/>
</dbReference>
<dbReference type="InterPro" id="IPR024072">
    <property type="entry name" value="DHFR-like_dom_sf"/>
</dbReference>
<dbReference type="InterPro" id="IPR017925">
    <property type="entry name" value="DHFR_CS"/>
</dbReference>
<dbReference type="InterPro" id="IPR001796">
    <property type="entry name" value="DHFR_dom"/>
</dbReference>
<dbReference type="PANTHER" id="PTHR48069">
    <property type="entry name" value="DIHYDROFOLATE REDUCTASE"/>
    <property type="match status" value="1"/>
</dbReference>
<dbReference type="PANTHER" id="PTHR48069:SF3">
    <property type="entry name" value="DIHYDROFOLATE REDUCTASE"/>
    <property type="match status" value="1"/>
</dbReference>
<dbReference type="Pfam" id="PF00186">
    <property type="entry name" value="DHFR_1"/>
    <property type="match status" value="1"/>
</dbReference>
<dbReference type="PRINTS" id="PR00070">
    <property type="entry name" value="DHFR"/>
</dbReference>
<dbReference type="SUPFAM" id="SSF53597">
    <property type="entry name" value="Dihydrofolate reductase-like"/>
    <property type="match status" value="1"/>
</dbReference>
<dbReference type="PROSITE" id="PS00075">
    <property type="entry name" value="DHFR_1"/>
    <property type="match status" value="1"/>
</dbReference>
<dbReference type="PROSITE" id="PS51330">
    <property type="entry name" value="DHFR_2"/>
    <property type="match status" value="1"/>
</dbReference>
<sequence>MAGGKIPIVGIVACLQPEMGIGFRGGLPWRLPSEMKYFRQVTSLTKDPNKKNALIMGRKTWESIPPKFRPLPNRMNVIISRSFKDDFVHDKERSIVQSNSLANAIMNLESNFKEHLERIYVIGGGEVYSQIFSITDHWLITKINPLDKNATPAMDTFLDAKKLEEVFSEQDPAQLKEFLPPKVELPETDCDQRYSLEEKGYCFEFTLYNRK</sequence>
<protein>
    <recommendedName>
        <fullName>Dihydrofolate reductase</fullName>
        <ecNumber>1.5.1.3</ecNumber>
    </recommendedName>
</protein>
<evidence type="ECO:0000250" key="1"/>
<evidence type="ECO:0000255" key="2">
    <source>
        <dbReference type="PROSITE-ProRule" id="PRU00660"/>
    </source>
</evidence>
<evidence type="ECO:0000269" key="3">
    <source>
    </source>
</evidence>
<evidence type="ECO:0000305" key="4"/>
<organism>
    <name type="scientific">Saccharomyces cerevisiae (strain ATCC 204508 / S288c)</name>
    <name type="common">Baker's yeast</name>
    <dbReference type="NCBI Taxonomy" id="559292"/>
    <lineage>
        <taxon>Eukaryota</taxon>
        <taxon>Fungi</taxon>
        <taxon>Dikarya</taxon>
        <taxon>Ascomycota</taxon>
        <taxon>Saccharomycotina</taxon>
        <taxon>Saccharomycetes</taxon>
        <taxon>Saccharomycetales</taxon>
        <taxon>Saccharomycetaceae</taxon>
        <taxon>Saccharomyces</taxon>
    </lineage>
</organism>
<gene>
    <name type="primary">DFR1</name>
    <name type="ordered locus">YOR236W</name>
    <name type="ORF">O5231</name>
</gene>
<comment type="function">
    <text evidence="1">Key enzyme in folate metabolism. Catalyzes an essential reaction for de novo glycine and purine synthesis, and for DNA precursor synthesis (By similarity).</text>
</comment>
<comment type="catalytic activity">
    <reaction evidence="2">
        <text>(6S)-5,6,7,8-tetrahydrofolate + NADP(+) = 7,8-dihydrofolate + NADPH + H(+)</text>
        <dbReference type="Rhea" id="RHEA:15009"/>
        <dbReference type="ChEBI" id="CHEBI:15378"/>
        <dbReference type="ChEBI" id="CHEBI:57451"/>
        <dbReference type="ChEBI" id="CHEBI:57453"/>
        <dbReference type="ChEBI" id="CHEBI:57783"/>
        <dbReference type="ChEBI" id="CHEBI:58349"/>
        <dbReference type="EC" id="1.5.1.3"/>
    </reaction>
</comment>
<comment type="pathway">
    <text>Cofactor biosynthesis; tetrahydrofolate biosynthesis; 5,6,7,8-tetrahydrofolate from 7,8-dihydrofolate: step 1/1.</text>
</comment>
<comment type="miscellaneous">
    <text evidence="3">Present with 1080 molecules/cell in log phase SD medium.</text>
</comment>
<comment type="similarity">
    <text evidence="4">Belongs to the dihydrofolate reductase family.</text>
</comment>
<feature type="chain" id="PRO_0000186378" description="Dihydrofolate reductase">
    <location>
        <begin position="1"/>
        <end position="211"/>
    </location>
</feature>
<feature type="domain" description="DHFR" evidence="2">
    <location>
        <begin position="7"/>
        <end position="210"/>
    </location>
</feature>
<feature type="binding site" evidence="1">
    <location>
        <position position="13"/>
    </location>
    <ligand>
        <name>NADP(+)</name>
        <dbReference type="ChEBI" id="CHEBI:58349"/>
    </ligand>
</feature>
<feature type="binding site" evidence="1">
    <location>
        <begin position="20"/>
        <end position="26"/>
    </location>
    <ligand>
        <name>NADP(+)</name>
        <dbReference type="ChEBI" id="CHEBI:58349"/>
    </ligand>
</feature>
<feature type="binding site" evidence="1">
    <location>
        <begin position="34"/>
        <end position="39"/>
    </location>
    <ligand>
        <name>substrate</name>
    </ligand>
</feature>
<feature type="binding site" evidence="1">
    <location>
        <begin position="58"/>
        <end position="60"/>
    </location>
    <ligand>
        <name>NADP(+)</name>
        <dbReference type="ChEBI" id="CHEBI:58349"/>
    </ligand>
</feature>
<feature type="binding site" evidence="1">
    <location>
        <position position="74"/>
    </location>
    <ligand>
        <name>substrate</name>
    </ligand>
</feature>
<feature type="binding site" evidence="1">
    <location>
        <begin position="80"/>
        <end position="82"/>
    </location>
    <ligand>
        <name>NADP(+)</name>
        <dbReference type="ChEBI" id="CHEBI:58349"/>
    </ligand>
</feature>
<feature type="binding site" evidence="1">
    <location>
        <begin position="123"/>
        <end position="130"/>
    </location>
    <ligand>
        <name>NADP(+)</name>
        <dbReference type="ChEBI" id="CHEBI:58349"/>
    </ligand>
</feature>
<feature type="sequence conflict" description="In Ref. 1; CAA68779." evidence="4" ref="1">
    <original>L</original>
    <variation>V</variation>
    <location>
        <position position="27"/>
    </location>
</feature>
<name>DYR_YEAST</name>
<keyword id="KW-0521">NADP</keyword>
<keyword id="KW-0554">One-carbon metabolism</keyword>
<keyword id="KW-0560">Oxidoreductase</keyword>
<keyword id="KW-1185">Reference proteome</keyword>
<proteinExistence type="evidence at protein level"/>
<reference key="1">
    <citation type="journal article" date="1987" name="Nucleic Acids Res.">
        <title>Molecular characterization of the Saccharomyces cerevisiae dihydrofolate reductase gene (DFR1).</title>
        <authorList>
            <person name="Lagosky P.A."/>
            <person name="Taylor G.R."/>
            <person name="Haynes R.H."/>
        </authorList>
    </citation>
    <scope>NUCLEOTIDE SEQUENCE [GENOMIC DNA]</scope>
</reference>
<reference key="2">
    <citation type="journal article" date="1988" name="Gene">
        <title>Nucleotide sequence of the dihydrofolate reductase gene of Saccharomyces cerevisiae.</title>
        <authorList>
            <person name="Fling M.E."/>
            <person name="Kopf J."/>
            <person name="Richards C.A."/>
        </authorList>
    </citation>
    <scope>NUCLEOTIDE SEQUENCE [GENOMIC DNA]</scope>
</reference>
<reference key="3">
    <citation type="journal article" date="1988" name="Gene">
        <title>Mapping and sequencing of the dihydrofolate reductase gene (DFR1) of Saccharomyces cerevisiae.</title>
        <authorList>
            <person name="Barclay B.J."/>
            <person name="Huang T."/>
            <person name="Nagel M.G."/>
            <person name="Misener V.L."/>
            <person name="Game J.C."/>
            <person name="Wahl G.M."/>
        </authorList>
    </citation>
    <scope>NUCLEOTIDE SEQUENCE [GENOMIC DNA]</scope>
</reference>
<reference key="4">
    <citation type="journal article" date="1996" name="Yeast">
        <title>Sequence and analysis of a 26.9 kb fragment from chromosome XV of the yeast Saccharomyces cerevisiae.</title>
        <authorList>
            <person name="Boyer J."/>
            <person name="Michaux G."/>
            <person name="Fairhead C."/>
            <person name="Gaillon L."/>
            <person name="Dujon B."/>
        </authorList>
    </citation>
    <scope>NUCLEOTIDE SEQUENCE [GENOMIC DNA]</scope>
    <source>
        <strain>ATCC 96604 / S288c / FY1679</strain>
    </source>
</reference>
<reference key="5">
    <citation type="journal article" date="1997" name="Nature">
        <title>The nucleotide sequence of Saccharomyces cerevisiae chromosome XV.</title>
        <authorList>
            <person name="Dujon B."/>
            <person name="Albermann K."/>
            <person name="Aldea M."/>
            <person name="Alexandraki D."/>
            <person name="Ansorge W."/>
            <person name="Arino J."/>
            <person name="Benes V."/>
            <person name="Bohn C."/>
            <person name="Bolotin-Fukuhara M."/>
            <person name="Bordonne R."/>
            <person name="Boyer J."/>
            <person name="Camasses A."/>
            <person name="Casamayor A."/>
            <person name="Casas C."/>
            <person name="Cheret G."/>
            <person name="Cziepluch C."/>
            <person name="Daignan-Fornier B."/>
            <person name="Dang V.-D."/>
            <person name="de Haan M."/>
            <person name="Delius H."/>
            <person name="Durand P."/>
            <person name="Fairhead C."/>
            <person name="Feldmann H."/>
            <person name="Gaillon L."/>
            <person name="Galisson F."/>
            <person name="Gamo F.-J."/>
            <person name="Gancedo C."/>
            <person name="Goffeau A."/>
            <person name="Goulding S.E."/>
            <person name="Grivell L.A."/>
            <person name="Habbig B."/>
            <person name="Hand N.J."/>
            <person name="Hani J."/>
            <person name="Hattenhorst U."/>
            <person name="Hebling U."/>
            <person name="Hernando Y."/>
            <person name="Herrero E."/>
            <person name="Heumann K."/>
            <person name="Hiesel R."/>
            <person name="Hilger F."/>
            <person name="Hofmann B."/>
            <person name="Hollenberg C.P."/>
            <person name="Hughes B."/>
            <person name="Jauniaux J.-C."/>
            <person name="Kalogeropoulos A."/>
            <person name="Katsoulou C."/>
            <person name="Kordes E."/>
            <person name="Lafuente M.J."/>
            <person name="Landt O."/>
            <person name="Louis E.J."/>
            <person name="Maarse A.C."/>
            <person name="Madania A."/>
            <person name="Mannhaupt G."/>
            <person name="Marck C."/>
            <person name="Martin R.P."/>
            <person name="Mewes H.-W."/>
            <person name="Michaux G."/>
            <person name="Paces V."/>
            <person name="Parle-McDermott A.G."/>
            <person name="Pearson B.M."/>
            <person name="Perrin A."/>
            <person name="Pettersson B."/>
            <person name="Poch O."/>
            <person name="Pohl T.M."/>
            <person name="Poirey R."/>
            <person name="Portetelle D."/>
            <person name="Pujol A."/>
            <person name="Purnelle B."/>
            <person name="Ramezani Rad M."/>
            <person name="Rechmann S."/>
            <person name="Schwager C."/>
            <person name="Schweizer M."/>
            <person name="Sor F."/>
            <person name="Sterky F."/>
            <person name="Tarassov I.A."/>
            <person name="Teodoru C."/>
            <person name="Tettelin H."/>
            <person name="Thierry A."/>
            <person name="Tobiasch E."/>
            <person name="Tzermia M."/>
            <person name="Uhlen M."/>
            <person name="Unseld M."/>
            <person name="Valens M."/>
            <person name="Vandenbol M."/>
            <person name="Vetter I."/>
            <person name="Vlcek C."/>
            <person name="Voet M."/>
            <person name="Volckaert G."/>
            <person name="Voss H."/>
            <person name="Wambutt R."/>
            <person name="Wedler H."/>
            <person name="Wiemann S."/>
            <person name="Winsor B."/>
            <person name="Wolfe K.H."/>
            <person name="Zollner A."/>
            <person name="Zumstein E."/>
            <person name="Kleine K."/>
        </authorList>
    </citation>
    <scope>NUCLEOTIDE SEQUENCE [LARGE SCALE GENOMIC DNA]</scope>
    <source>
        <strain>ATCC 204508 / S288c</strain>
    </source>
</reference>
<reference key="6">
    <citation type="journal article" date="2014" name="G3 (Bethesda)">
        <title>The reference genome sequence of Saccharomyces cerevisiae: Then and now.</title>
        <authorList>
            <person name="Engel S.R."/>
            <person name="Dietrich F.S."/>
            <person name="Fisk D.G."/>
            <person name="Binkley G."/>
            <person name="Balakrishnan R."/>
            <person name="Costanzo M.C."/>
            <person name="Dwight S.S."/>
            <person name="Hitz B.C."/>
            <person name="Karra K."/>
            <person name="Nash R.S."/>
            <person name="Weng S."/>
            <person name="Wong E.D."/>
            <person name="Lloyd P."/>
            <person name="Skrzypek M.S."/>
            <person name="Miyasato S.R."/>
            <person name="Simison M."/>
            <person name="Cherry J.M."/>
        </authorList>
    </citation>
    <scope>GENOME REANNOTATION</scope>
    <source>
        <strain>ATCC 204508 / S288c</strain>
    </source>
</reference>
<reference key="7">
    <citation type="journal article" date="2003" name="Nature">
        <title>Global analysis of protein expression in yeast.</title>
        <authorList>
            <person name="Ghaemmaghami S."/>
            <person name="Huh W.-K."/>
            <person name="Bower K."/>
            <person name="Howson R.W."/>
            <person name="Belle A."/>
            <person name="Dephoure N."/>
            <person name="O'Shea E.K."/>
            <person name="Weissman J.S."/>
        </authorList>
    </citation>
    <scope>LEVEL OF PROTEIN EXPRESSION [LARGE SCALE ANALYSIS]</scope>
</reference>